<proteinExistence type="inferred from homology"/>
<evidence type="ECO:0000255" key="1">
    <source>
        <dbReference type="HAMAP-Rule" id="MF_00366"/>
    </source>
</evidence>
<name>RPOZ_LEIXX</name>
<gene>
    <name evidence="1" type="primary">rpoZ</name>
    <name type="ordered locus">Lxx11130</name>
</gene>
<sequence>MATSTNGIIDPPIDDLLSKVESKYALVIFASKRARQINDYYADLHEGSLFDNVGPLVDSSVDDKPLSVAMHEINEDRLVLKPIAAAE</sequence>
<dbReference type="EC" id="2.7.7.6" evidence="1"/>
<dbReference type="EMBL" id="AE016822">
    <property type="protein sequence ID" value="AAT88964.1"/>
    <property type="molecule type" value="Genomic_DNA"/>
</dbReference>
<dbReference type="RefSeq" id="WP_011185960.1">
    <property type="nucleotide sequence ID" value="NC_006087.1"/>
</dbReference>
<dbReference type="SMR" id="Q6AF81"/>
<dbReference type="STRING" id="281090.Lxx11130"/>
<dbReference type="KEGG" id="lxx:Lxx11130"/>
<dbReference type="eggNOG" id="COG1758">
    <property type="taxonomic scope" value="Bacteria"/>
</dbReference>
<dbReference type="HOGENOM" id="CLU_125406_1_1_11"/>
<dbReference type="Proteomes" id="UP000001306">
    <property type="component" value="Chromosome"/>
</dbReference>
<dbReference type="GO" id="GO:0000428">
    <property type="term" value="C:DNA-directed RNA polymerase complex"/>
    <property type="evidence" value="ECO:0007669"/>
    <property type="project" value="UniProtKB-KW"/>
</dbReference>
<dbReference type="GO" id="GO:0003677">
    <property type="term" value="F:DNA binding"/>
    <property type="evidence" value="ECO:0007669"/>
    <property type="project" value="UniProtKB-UniRule"/>
</dbReference>
<dbReference type="GO" id="GO:0003899">
    <property type="term" value="F:DNA-directed RNA polymerase activity"/>
    <property type="evidence" value="ECO:0007669"/>
    <property type="project" value="UniProtKB-UniRule"/>
</dbReference>
<dbReference type="GO" id="GO:0006351">
    <property type="term" value="P:DNA-templated transcription"/>
    <property type="evidence" value="ECO:0007669"/>
    <property type="project" value="UniProtKB-UniRule"/>
</dbReference>
<dbReference type="Gene3D" id="3.90.940.10">
    <property type="match status" value="1"/>
</dbReference>
<dbReference type="HAMAP" id="MF_00366">
    <property type="entry name" value="RNApol_bact_RpoZ"/>
    <property type="match status" value="1"/>
</dbReference>
<dbReference type="InterPro" id="IPR003716">
    <property type="entry name" value="DNA-dir_RNA_pol_omega"/>
</dbReference>
<dbReference type="InterPro" id="IPR006110">
    <property type="entry name" value="Pol_omega/Rpo6/RPB6"/>
</dbReference>
<dbReference type="InterPro" id="IPR036161">
    <property type="entry name" value="RPB6/omega-like_sf"/>
</dbReference>
<dbReference type="NCBIfam" id="TIGR00690">
    <property type="entry name" value="rpoZ"/>
    <property type="match status" value="1"/>
</dbReference>
<dbReference type="PANTHER" id="PTHR34476">
    <property type="entry name" value="DNA-DIRECTED RNA POLYMERASE SUBUNIT OMEGA"/>
    <property type="match status" value="1"/>
</dbReference>
<dbReference type="PANTHER" id="PTHR34476:SF1">
    <property type="entry name" value="DNA-DIRECTED RNA POLYMERASE SUBUNIT OMEGA"/>
    <property type="match status" value="1"/>
</dbReference>
<dbReference type="Pfam" id="PF01192">
    <property type="entry name" value="RNA_pol_Rpb6"/>
    <property type="match status" value="1"/>
</dbReference>
<dbReference type="SMART" id="SM01409">
    <property type="entry name" value="RNA_pol_Rpb6"/>
    <property type="match status" value="1"/>
</dbReference>
<dbReference type="SUPFAM" id="SSF63562">
    <property type="entry name" value="RPB6/omega subunit-like"/>
    <property type="match status" value="1"/>
</dbReference>
<accession>Q6AF81</accession>
<reference key="1">
    <citation type="journal article" date="2004" name="Mol. Plant Microbe Interact.">
        <title>The genome sequence of the Gram-positive sugarcane pathogen Leifsonia xyli subsp. xyli.</title>
        <authorList>
            <person name="Monteiro-Vitorello C.B."/>
            <person name="Camargo L.E.A."/>
            <person name="Van Sluys M.A."/>
            <person name="Kitajima J.P."/>
            <person name="Truffi D."/>
            <person name="do Amaral A.M."/>
            <person name="Harakava R."/>
            <person name="de Oliveira J.C.F."/>
            <person name="Wood D."/>
            <person name="de Oliveira M.C."/>
            <person name="Miyaki C.Y."/>
            <person name="Takita M.A."/>
            <person name="da Silva A.C.R."/>
            <person name="Furlan L.R."/>
            <person name="Carraro D.M."/>
            <person name="Camarotte G."/>
            <person name="Almeida N.F. Jr."/>
            <person name="Carrer H."/>
            <person name="Coutinho L.L."/>
            <person name="El-Dorry H.A."/>
            <person name="Ferro M.I.T."/>
            <person name="Gagliardi P.R."/>
            <person name="Giglioti E."/>
            <person name="Goldman M.H.S."/>
            <person name="Goldman G.H."/>
            <person name="Kimura E.T."/>
            <person name="Ferro E.S."/>
            <person name="Kuramae E.E."/>
            <person name="Lemos E.G.M."/>
            <person name="Lemos M.V.F."/>
            <person name="Mauro S.M.Z."/>
            <person name="Machado M.A."/>
            <person name="Marino C.L."/>
            <person name="Menck C.F."/>
            <person name="Nunes L.R."/>
            <person name="Oliveira R.C."/>
            <person name="Pereira G.G."/>
            <person name="Siqueira W."/>
            <person name="de Souza A.A."/>
            <person name="Tsai S.M."/>
            <person name="Zanca A.S."/>
            <person name="Simpson A.J.G."/>
            <person name="Brumbley S.M."/>
            <person name="Setubal J.C."/>
        </authorList>
    </citation>
    <scope>NUCLEOTIDE SEQUENCE [LARGE SCALE GENOMIC DNA]</scope>
    <source>
        <strain>CTCB07</strain>
    </source>
</reference>
<protein>
    <recommendedName>
        <fullName evidence="1">DNA-directed RNA polymerase subunit omega</fullName>
        <shortName evidence="1">RNAP omega subunit</shortName>
        <ecNumber evidence="1">2.7.7.6</ecNumber>
    </recommendedName>
    <alternativeName>
        <fullName evidence="1">RNA polymerase omega subunit</fullName>
    </alternativeName>
    <alternativeName>
        <fullName evidence="1">Transcriptase subunit omega</fullName>
    </alternativeName>
</protein>
<organism>
    <name type="scientific">Leifsonia xyli subsp. xyli (strain CTCB07)</name>
    <dbReference type="NCBI Taxonomy" id="281090"/>
    <lineage>
        <taxon>Bacteria</taxon>
        <taxon>Bacillati</taxon>
        <taxon>Actinomycetota</taxon>
        <taxon>Actinomycetes</taxon>
        <taxon>Micrococcales</taxon>
        <taxon>Microbacteriaceae</taxon>
        <taxon>Leifsonia</taxon>
    </lineage>
</organism>
<keyword id="KW-0240">DNA-directed RNA polymerase</keyword>
<keyword id="KW-0548">Nucleotidyltransferase</keyword>
<keyword id="KW-1185">Reference proteome</keyword>
<keyword id="KW-0804">Transcription</keyword>
<keyword id="KW-0808">Transferase</keyword>
<feature type="chain" id="PRO_0000128947" description="DNA-directed RNA polymerase subunit omega">
    <location>
        <begin position="1"/>
        <end position="87"/>
    </location>
</feature>
<comment type="function">
    <text evidence="1">Promotes RNA polymerase assembly. Latches the N- and C-terminal regions of the beta' subunit thereby facilitating its interaction with the beta and alpha subunits.</text>
</comment>
<comment type="catalytic activity">
    <reaction evidence="1">
        <text>RNA(n) + a ribonucleoside 5'-triphosphate = RNA(n+1) + diphosphate</text>
        <dbReference type="Rhea" id="RHEA:21248"/>
        <dbReference type="Rhea" id="RHEA-COMP:14527"/>
        <dbReference type="Rhea" id="RHEA-COMP:17342"/>
        <dbReference type="ChEBI" id="CHEBI:33019"/>
        <dbReference type="ChEBI" id="CHEBI:61557"/>
        <dbReference type="ChEBI" id="CHEBI:140395"/>
        <dbReference type="EC" id="2.7.7.6"/>
    </reaction>
</comment>
<comment type="subunit">
    <text evidence="1">The RNAP catalytic core consists of 2 alpha, 1 beta, 1 beta' and 1 omega subunit. When a sigma factor is associated with the core the holoenzyme is formed, which can initiate transcription.</text>
</comment>
<comment type="similarity">
    <text evidence="1">Belongs to the RNA polymerase subunit omega family.</text>
</comment>